<keyword id="KW-1003">Cell membrane</keyword>
<keyword id="KW-0472">Membrane</keyword>
<keyword id="KW-0479">Metal-binding</keyword>
<keyword id="KW-0813">Transport</keyword>
<keyword id="KW-0862">Zinc</keyword>
<evidence type="ECO:0000255" key="1">
    <source>
        <dbReference type="HAMAP-Rule" id="MF_01871"/>
    </source>
</evidence>
<protein>
    <recommendedName>
        <fullName evidence="1">Probable inorganic carbon transporter subunit DabA</fullName>
    </recommendedName>
</protein>
<name>DABA_STAAB</name>
<proteinExistence type="inferred from homology"/>
<comment type="function">
    <text evidence="1">Part of an energy-coupled inorganic carbon pump.</text>
</comment>
<comment type="cofactor">
    <cofactor evidence="1">
        <name>Zn(2+)</name>
        <dbReference type="ChEBI" id="CHEBI:29105"/>
    </cofactor>
</comment>
<comment type="subunit">
    <text evidence="1">Forms a complex with DabB.</text>
</comment>
<comment type="subcellular location">
    <subcellularLocation>
        <location evidence="1">Cell membrane</location>
        <topology evidence="1">Peripheral membrane protein</topology>
    </subcellularLocation>
</comment>
<comment type="similarity">
    <text evidence="1">Belongs to the inorganic carbon transporter (TC 9.A.2) DabA family.</text>
</comment>
<feature type="chain" id="PRO_0000387302" description="Probable inorganic carbon transporter subunit DabA">
    <location>
        <begin position="1"/>
        <end position="901"/>
    </location>
</feature>
<feature type="binding site" evidence="1">
    <location>
        <position position="424"/>
    </location>
    <ligand>
        <name>Zn(2+)</name>
        <dbReference type="ChEBI" id="CHEBI:29105"/>
    </ligand>
</feature>
<feature type="binding site" evidence="1">
    <location>
        <position position="426"/>
    </location>
    <ligand>
        <name>Zn(2+)</name>
        <dbReference type="ChEBI" id="CHEBI:29105"/>
    </ligand>
</feature>
<feature type="binding site" evidence="1">
    <location>
        <position position="606"/>
    </location>
    <ligand>
        <name>Zn(2+)</name>
        <dbReference type="ChEBI" id="CHEBI:29105"/>
    </ligand>
</feature>
<feature type="binding site" evidence="1">
    <location>
        <position position="621"/>
    </location>
    <ligand>
        <name>Zn(2+)</name>
        <dbReference type="ChEBI" id="CHEBI:29105"/>
    </ligand>
</feature>
<gene>
    <name evidence="1" type="primary">dabA</name>
    <name type="ordered locus">SAB0403</name>
</gene>
<sequence>MTTQLNINLVIENAKRVITPLSPISIFAARNPWEGLEADTFEDVAKWLRDVRDVDIFPNKALIESAVARGELDESVFNQLVTDMLLEHHYNIPQHYINLYIDNIKTLKDVPASYMNHSNVDVVADLLLEKSKRDMAESYHHYDVRPMSDAIIDEQGEPLSEQVNRQMIKWTKLYIDQFLSSWTMPKREQSFYHAWLHLAQHDHSFTKAQRQVIKDLPNDPKMTIESVLNHFSIAQEDYQAYVEGHLLALPGWAGMLYYRSQQHHFEQHLLTDYLAIRLVVEQLLVGDEFKSVTKDCESRSENWFKQTVASWCYYSDMPSDVLLQHDVNEIQTFIHFAATMNKNVFKNLWLIAWEMTYESQVKQKIKAGHESLAGALDVNQVNVTENDNANQSHSVSLNDTQAVDENNSELNQVDTSTKAQIAFCIDVRSEPFRRHIEAAGPFETIGIAGFFGLPIQKDAVDEQFKHDSLPVMVPPAYRIKEFADRYDMNVYRQQQQTMSSMFYTFKLMKNNVMPSLLLPELSGPFLSLSTIVNTIMPRKSRASLQKIKQKWLKKPETKLTIDREFDRTSDLPVGFTEQEQIDFALQALKLMDLTEAFAPFVVLAGHASHSHNNPHHASLECGACGGASSGFNAKLLAMICNRPNVRQGLKQAGVYIPETTVFAAAEHHTSTDTLAWVYVPDTLSALALDAYESLNDVMPMISEHANRERLDKLPTIGRVNHPVEEAQRFASDWSEVRPEWGLAKNASFIIGRRQLTKGIDLEGRTFLHNYDWRKDKDGTLLNTIISGPVLVAQWINLQYYASTVAPHFYGSGNKATQTVTSGVGVMQGNASDLMYGLSWQSVMAADRTMYHSPIRLLVVIQAPDYVVARLLANNEHFARKASNHWLRLMSVNEEGRFKSWI</sequence>
<dbReference type="EMBL" id="AJ938182">
    <property type="protein sequence ID" value="CAI80091.1"/>
    <property type="molecule type" value="Genomic_DNA"/>
</dbReference>
<dbReference type="RefSeq" id="WP_000211523.1">
    <property type="nucleotide sequence ID" value="NC_007622.1"/>
</dbReference>
<dbReference type="KEGG" id="sab:SAB0403"/>
<dbReference type="HOGENOM" id="CLU_009885_0_0_9"/>
<dbReference type="GO" id="GO:0005886">
    <property type="term" value="C:plasma membrane"/>
    <property type="evidence" value="ECO:0007669"/>
    <property type="project" value="UniProtKB-SubCell"/>
</dbReference>
<dbReference type="GO" id="GO:0008270">
    <property type="term" value="F:zinc ion binding"/>
    <property type="evidence" value="ECO:0007669"/>
    <property type="project" value="UniProtKB-UniRule"/>
</dbReference>
<dbReference type="HAMAP" id="MF_01871">
    <property type="entry name" value="DabA"/>
    <property type="match status" value="1"/>
</dbReference>
<dbReference type="InterPro" id="IPR018752">
    <property type="entry name" value="DabA"/>
</dbReference>
<dbReference type="PANTHER" id="PTHR38344:SF1">
    <property type="entry name" value="INORGANIC CARBON TRANSPORTER SUBUNIT DABA-RELATED"/>
    <property type="match status" value="1"/>
</dbReference>
<dbReference type="PANTHER" id="PTHR38344">
    <property type="entry name" value="UPF0753 PROTEIN AQ_863"/>
    <property type="match status" value="1"/>
</dbReference>
<dbReference type="Pfam" id="PF10070">
    <property type="entry name" value="DabA"/>
    <property type="match status" value="1"/>
</dbReference>
<organism>
    <name type="scientific">Staphylococcus aureus (strain bovine RF122 / ET3-1)</name>
    <dbReference type="NCBI Taxonomy" id="273036"/>
    <lineage>
        <taxon>Bacteria</taxon>
        <taxon>Bacillati</taxon>
        <taxon>Bacillota</taxon>
        <taxon>Bacilli</taxon>
        <taxon>Bacillales</taxon>
        <taxon>Staphylococcaceae</taxon>
        <taxon>Staphylococcus</taxon>
    </lineage>
</organism>
<accession>Q2YVS1</accession>
<reference key="1">
    <citation type="journal article" date="2007" name="PLoS ONE">
        <title>Molecular correlates of host specialization in Staphylococcus aureus.</title>
        <authorList>
            <person name="Herron-Olson L."/>
            <person name="Fitzgerald J.R."/>
            <person name="Musser J.M."/>
            <person name="Kapur V."/>
        </authorList>
    </citation>
    <scope>NUCLEOTIDE SEQUENCE [LARGE SCALE GENOMIC DNA]</scope>
    <source>
        <strain>bovine RF122 / ET3-1</strain>
    </source>
</reference>